<comment type="function">
    <text evidence="4 5 6">O-methyltransferase; part of the gene cluster that mediates the biosynthesis of DIF-1 (Differentiation Inducing Factor-1), a signal molecule involved in the differentiation of pstO (prestalk-O) cells (PubMed:9446571). The three-step process begins with the formation of (2,4,6-trihydroxyphenyl)-1-hexan-1-one (THPH) by the polyketide synthase StlB (PubMed:16906151). THPH is then dichlorinated by the flavin-dependent halogenase ChlA (PubMed:20231486). The last step of DIF-1 biosynthesis is the O-methylation of dichloro-THPH (or des-methyl-DIF-1) by the methyltransferase DmtA to yield DIF-1 (PubMed:9446571).</text>
</comment>
<comment type="catalytic activity">
    <reaction evidence="6">
        <text>(3,5-dichloro-2,4,6-trihydroxyphenyl)hexan-1-one + S-adenosyl-L-methionine = 1-(3,5-dichloro-2,6-dihydroxy-4-methoxyphenyl)hexan-1-one + S-adenosyl-L-homocysteine + H(+)</text>
        <dbReference type="Rhea" id="RHEA:48396"/>
        <dbReference type="ChEBI" id="CHEBI:15378"/>
        <dbReference type="ChEBI" id="CHEBI:57856"/>
        <dbReference type="ChEBI" id="CHEBI:59789"/>
        <dbReference type="ChEBI" id="CHEBI:90397"/>
        <dbReference type="ChEBI" id="CHEBI:90398"/>
    </reaction>
</comment>
<comment type="biophysicochemical properties">
    <kinetics>
        <KM evidence="6">1.1 uM for chloro-THPH</KM>
        <KM evidence="6">14.6 uM for dichloro-THPH</KM>
        <KM evidence="6">17.7 uM for 2-methoxydichloro-THPH</KM>
    </kinetics>
    <phDependence>
        <text evidence="6">Optimum pH is 6.5-7.5.</text>
    </phDependence>
</comment>
<comment type="developmental stage">
    <text evidence="2 3">Maximally expressed in prespore cells. Detectable expression levels during aggregation stage. Maximum expression at the first-finger/slug stage.</text>
</comment>
<comment type="induction">
    <text evidence="3">By cyclic-AMP; this induction is inhibited by DIF-1.</text>
</comment>
<comment type="similarity">
    <text evidence="1">Belongs to the class I-like SAM-binding methyltransferase superfamily. Cation-independent O-methyltransferase family. COMT subfamily.</text>
</comment>
<name>DMTA_DICDI</name>
<dbReference type="EC" id="2.1.1.-" evidence="6"/>
<dbReference type="EMBL" id="AF487404">
    <property type="protein sequence ID" value="AAL93252.1"/>
    <property type="molecule type" value="mRNA"/>
</dbReference>
<dbReference type="EMBL" id="AAFI02000139">
    <property type="protein sequence ID" value="EAL62751.1"/>
    <property type="molecule type" value="Genomic_DNA"/>
</dbReference>
<dbReference type="RefSeq" id="XP_636282.1">
    <property type="nucleotide sequence ID" value="XM_631190.1"/>
</dbReference>
<dbReference type="SMR" id="Q8T638"/>
<dbReference type="FunCoup" id="Q8T638">
    <property type="interactions" value="2"/>
</dbReference>
<dbReference type="STRING" id="44689.Q8T638"/>
<dbReference type="PaxDb" id="44689-DDB0219945"/>
<dbReference type="EnsemblProtists" id="EAL62751">
    <property type="protein sequence ID" value="EAL62751"/>
    <property type="gene ID" value="DDB_G0289329"/>
</dbReference>
<dbReference type="GeneID" id="8627100"/>
<dbReference type="KEGG" id="ddi:DDB_G0289329"/>
<dbReference type="dictyBase" id="DDB_G0289329">
    <property type="gene designation" value="dmtA"/>
</dbReference>
<dbReference type="VEuPathDB" id="AmoebaDB:DDB_G0289329"/>
<dbReference type="eggNOG" id="KOG3178">
    <property type="taxonomic scope" value="Eukaryota"/>
</dbReference>
<dbReference type="HOGENOM" id="CLU_005533_12_0_1"/>
<dbReference type="InParanoid" id="Q8T638"/>
<dbReference type="OMA" id="CTEPWTW"/>
<dbReference type="PhylomeDB" id="Q8T638"/>
<dbReference type="Reactome" id="R-DDI-209931">
    <property type="pathway name" value="Serotonin and melatonin biosynthesis"/>
</dbReference>
<dbReference type="SABIO-RK" id="Q8T638"/>
<dbReference type="PRO" id="PR:Q8T638"/>
<dbReference type="Proteomes" id="UP000002195">
    <property type="component" value="Chromosome 5"/>
</dbReference>
<dbReference type="GO" id="GO:0106268">
    <property type="term" value="F:3,5-dichloro-THPH methyl transferase activity"/>
    <property type="evidence" value="ECO:0007669"/>
    <property type="project" value="RHEA"/>
</dbReference>
<dbReference type="GO" id="GO:0008171">
    <property type="term" value="F:O-methyltransferase activity"/>
    <property type="evidence" value="ECO:0000314"/>
    <property type="project" value="dictyBase"/>
</dbReference>
<dbReference type="GO" id="GO:0046983">
    <property type="term" value="F:protein dimerization activity"/>
    <property type="evidence" value="ECO:0007669"/>
    <property type="project" value="InterPro"/>
</dbReference>
<dbReference type="GO" id="GO:0008757">
    <property type="term" value="F:S-adenosylmethionine-dependent methyltransferase activity"/>
    <property type="evidence" value="ECO:0000314"/>
    <property type="project" value="dictyBase"/>
</dbReference>
<dbReference type="GO" id="GO:0009058">
    <property type="term" value="P:biosynthetic process"/>
    <property type="evidence" value="ECO:0000318"/>
    <property type="project" value="GO_Central"/>
</dbReference>
<dbReference type="GO" id="GO:0031154">
    <property type="term" value="P:culmination involved in sorocarp development"/>
    <property type="evidence" value="ECO:0000315"/>
    <property type="project" value="dictyBase"/>
</dbReference>
<dbReference type="GO" id="GO:0031148">
    <property type="term" value="P:DIF-1 biosynthetic process"/>
    <property type="evidence" value="ECO:0000314"/>
    <property type="project" value="dictyBase"/>
</dbReference>
<dbReference type="GO" id="GO:0032259">
    <property type="term" value="P:methylation"/>
    <property type="evidence" value="ECO:0000318"/>
    <property type="project" value="GO_Central"/>
</dbReference>
<dbReference type="GO" id="GO:0010623">
    <property type="term" value="P:programmed cell death involved in cell development"/>
    <property type="evidence" value="ECO:0000315"/>
    <property type="project" value="dictyBase"/>
</dbReference>
<dbReference type="GO" id="GO:0045595">
    <property type="term" value="P:regulation of cell differentiation"/>
    <property type="evidence" value="ECO:0000315"/>
    <property type="project" value="dictyBase"/>
</dbReference>
<dbReference type="GO" id="GO:0031288">
    <property type="term" value="P:sorocarp morphogenesis"/>
    <property type="evidence" value="ECO:0000315"/>
    <property type="project" value="dictyBase"/>
</dbReference>
<dbReference type="GO" id="GO:0031149">
    <property type="term" value="P:sorocarp stalk cell differentiation"/>
    <property type="evidence" value="ECO:0000315"/>
    <property type="project" value="dictyBase"/>
</dbReference>
<dbReference type="GO" id="GO:0030435">
    <property type="term" value="P:sporulation resulting in formation of a cellular spore"/>
    <property type="evidence" value="ECO:0000315"/>
    <property type="project" value="dictyBase"/>
</dbReference>
<dbReference type="FunFam" id="1.10.10.10:FF:001273">
    <property type="entry name" value="Des-methyl DIF-1 methyltransferase A"/>
    <property type="match status" value="1"/>
</dbReference>
<dbReference type="FunFam" id="3.40.50.150:FF:000407">
    <property type="entry name" value="O-methyltransferase 4"/>
    <property type="match status" value="1"/>
</dbReference>
<dbReference type="Gene3D" id="3.40.50.150">
    <property type="entry name" value="Vaccinia Virus protein VP39"/>
    <property type="match status" value="1"/>
</dbReference>
<dbReference type="Gene3D" id="1.10.10.10">
    <property type="entry name" value="Winged helix-like DNA-binding domain superfamily/Winged helix DNA-binding domain"/>
    <property type="match status" value="1"/>
</dbReference>
<dbReference type="InterPro" id="IPR016461">
    <property type="entry name" value="COMT-like"/>
</dbReference>
<dbReference type="InterPro" id="IPR001077">
    <property type="entry name" value="O_MeTrfase_dom"/>
</dbReference>
<dbReference type="InterPro" id="IPR012967">
    <property type="entry name" value="Plant_O-MeTrfase_dimerisation"/>
</dbReference>
<dbReference type="InterPro" id="IPR029063">
    <property type="entry name" value="SAM-dependent_MTases_sf"/>
</dbReference>
<dbReference type="InterPro" id="IPR036388">
    <property type="entry name" value="WH-like_DNA-bd_sf"/>
</dbReference>
<dbReference type="InterPro" id="IPR036390">
    <property type="entry name" value="WH_DNA-bd_sf"/>
</dbReference>
<dbReference type="PANTHER" id="PTHR43712:SF2">
    <property type="entry name" value="O-METHYLTRANSFERASE CICE"/>
    <property type="match status" value="1"/>
</dbReference>
<dbReference type="PANTHER" id="PTHR43712">
    <property type="entry name" value="PUTATIVE (AFU_ORTHOLOGUE AFUA_4G14580)-RELATED"/>
    <property type="match status" value="1"/>
</dbReference>
<dbReference type="Pfam" id="PF08100">
    <property type="entry name" value="Dimerisation"/>
    <property type="match status" value="1"/>
</dbReference>
<dbReference type="Pfam" id="PF00891">
    <property type="entry name" value="Methyltransf_2"/>
    <property type="match status" value="1"/>
</dbReference>
<dbReference type="PIRSF" id="PIRSF005739">
    <property type="entry name" value="O-mtase"/>
    <property type="match status" value="1"/>
</dbReference>
<dbReference type="SUPFAM" id="SSF53335">
    <property type="entry name" value="S-adenosyl-L-methionine-dependent methyltransferases"/>
    <property type="match status" value="1"/>
</dbReference>
<dbReference type="SUPFAM" id="SSF46785">
    <property type="entry name" value="Winged helix' DNA-binding domain"/>
    <property type="match status" value="1"/>
</dbReference>
<dbReference type="PROSITE" id="PS51683">
    <property type="entry name" value="SAM_OMT_II"/>
    <property type="match status" value="1"/>
</dbReference>
<accession>Q8T638</accession>
<accession>Q54HL9</accession>
<keyword id="KW-0221">Differentiation</keyword>
<keyword id="KW-0489">Methyltransferase</keyword>
<keyword id="KW-1185">Reference proteome</keyword>
<keyword id="KW-0949">S-adenosyl-L-methionine</keyword>
<keyword id="KW-0749">Sporulation</keyword>
<keyword id="KW-0808">Transferase</keyword>
<sequence length="363" mass="41619">MISNSDCDENLIKQQQQEIQDKNFLIDVAIGYTKSNALSCALKYKIPQLLEDKSKSCKELSEILKVNCDNLYRLLRTLSTIGIFIEDEVEDGVFRNSRLSNLLRNSNSDSWVNNVYLQSHPNVIQSFMYLDKTIECGTSQGMTSQGFSSAWELFEKDKSLNAHFHNTMTSFTSDEIKTILEYIDFNQYKSIVDLGGSSGELLKSIAKSSRGQLVESFINFDLPLVINQNKVNNENGAAEFDKRYSEVASDLFVDSDYPSADCYTLKFIFHMFNDDKVLTILDKISKSIKPNGKVYVFDHIVQPKNQPYAPFYFDLQMIVNFNGKERSQNEWKTIFEKSPFKIDTILILPDSKRMSVIELSLKQ</sequence>
<evidence type="ECO:0000255" key="1">
    <source>
        <dbReference type="PROSITE-ProRule" id="PRU01020"/>
    </source>
</evidence>
<evidence type="ECO:0000269" key="2">
    <source>
    </source>
</evidence>
<evidence type="ECO:0000269" key="3">
    <source>
    </source>
</evidence>
<evidence type="ECO:0000269" key="4">
    <source>
    </source>
</evidence>
<evidence type="ECO:0000269" key="5">
    <source>
    </source>
</evidence>
<evidence type="ECO:0000269" key="6">
    <source>
    </source>
</evidence>
<evidence type="ECO:0000303" key="7">
    <source>
    </source>
</evidence>
<gene>
    <name evidence="7" type="primary">dmtA</name>
    <name type="synonym">omt8</name>
    <name type="ORF">DDB_G0289329</name>
</gene>
<protein>
    <recommendedName>
        <fullName evidence="7">Des-methyl DIF-1 methyltransferase A</fullName>
        <ecNumber evidence="6">2.1.1.-</ecNumber>
    </recommendedName>
    <alternativeName>
        <fullName>O-methyltransferase 8</fullName>
    </alternativeName>
</protein>
<reference key="1">
    <citation type="journal article" date="2000" name="Mol. Cell">
        <title>The role of DIF-1 signaling in Dictyostelium development.</title>
        <authorList>
            <person name="Thompson C.R."/>
            <person name="Kay R.R."/>
        </authorList>
    </citation>
    <scope>NUCLEOTIDE SEQUENCE [MRNA]</scope>
    <scope>FUNCTION</scope>
    <scope>DEVELOPMENTAL STAGE</scope>
    <source>
        <strain>AX2</strain>
    </source>
</reference>
<reference key="2">
    <citation type="journal article" date="2005" name="Nature">
        <title>The genome of the social amoeba Dictyostelium discoideum.</title>
        <authorList>
            <person name="Eichinger L."/>
            <person name="Pachebat J.A."/>
            <person name="Gloeckner G."/>
            <person name="Rajandream M.A."/>
            <person name="Sucgang R."/>
            <person name="Berriman M."/>
            <person name="Song J."/>
            <person name="Olsen R."/>
            <person name="Szafranski K."/>
            <person name="Xu Q."/>
            <person name="Tunggal B."/>
            <person name="Kummerfeld S."/>
            <person name="Madera M."/>
            <person name="Konfortov B.A."/>
            <person name="Rivero F."/>
            <person name="Bankier A.T."/>
            <person name="Lehmann R."/>
            <person name="Hamlin N."/>
            <person name="Davies R."/>
            <person name="Gaudet P."/>
            <person name="Fey P."/>
            <person name="Pilcher K."/>
            <person name="Chen G."/>
            <person name="Saunders D."/>
            <person name="Sodergren E.J."/>
            <person name="Davis P."/>
            <person name="Kerhornou A."/>
            <person name="Nie X."/>
            <person name="Hall N."/>
            <person name="Anjard C."/>
            <person name="Hemphill L."/>
            <person name="Bason N."/>
            <person name="Farbrother P."/>
            <person name="Desany B."/>
            <person name="Just E."/>
            <person name="Morio T."/>
            <person name="Rost R."/>
            <person name="Churcher C.M."/>
            <person name="Cooper J."/>
            <person name="Haydock S."/>
            <person name="van Driessche N."/>
            <person name="Cronin A."/>
            <person name="Goodhead I."/>
            <person name="Muzny D.M."/>
            <person name="Mourier T."/>
            <person name="Pain A."/>
            <person name="Lu M."/>
            <person name="Harper D."/>
            <person name="Lindsay R."/>
            <person name="Hauser H."/>
            <person name="James K.D."/>
            <person name="Quiles M."/>
            <person name="Madan Babu M."/>
            <person name="Saito T."/>
            <person name="Buchrieser C."/>
            <person name="Wardroper A."/>
            <person name="Felder M."/>
            <person name="Thangavelu M."/>
            <person name="Johnson D."/>
            <person name="Knights A."/>
            <person name="Loulseged H."/>
            <person name="Mungall K.L."/>
            <person name="Oliver K."/>
            <person name="Price C."/>
            <person name="Quail M.A."/>
            <person name="Urushihara H."/>
            <person name="Hernandez J."/>
            <person name="Rabbinowitsch E."/>
            <person name="Steffen D."/>
            <person name="Sanders M."/>
            <person name="Ma J."/>
            <person name="Kohara Y."/>
            <person name="Sharp S."/>
            <person name="Simmonds M.N."/>
            <person name="Spiegler S."/>
            <person name="Tivey A."/>
            <person name="Sugano S."/>
            <person name="White B."/>
            <person name="Walker D."/>
            <person name="Woodward J.R."/>
            <person name="Winckler T."/>
            <person name="Tanaka Y."/>
            <person name="Shaulsky G."/>
            <person name="Schleicher M."/>
            <person name="Weinstock G.M."/>
            <person name="Rosenthal A."/>
            <person name="Cox E.C."/>
            <person name="Chisholm R.L."/>
            <person name="Gibbs R.A."/>
            <person name="Loomis W.F."/>
            <person name="Platzer M."/>
            <person name="Kay R.R."/>
            <person name="Williams J.G."/>
            <person name="Dear P.H."/>
            <person name="Noegel A.A."/>
            <person name="Barrell B.G."/>
            <person name="Kuspa A."/>
        </authorList>
    </citation>
    <scope>NUCLEOTIDE SEQUENCE [LARGE SCALE GENOMIC DNA]</scope>
    <source>
        <strain>AX4</strain>
    </source>
</reference>
<reference key="3">
    <citation type="journal article" date="1998" name="J. Biol. Chem.">
        <title>The biosynthesis of differentiation-inducing factor, a chlorinated signal molecule regulating Dictyostelium development.</title>
        <authorList>
            <person name="Kay R.R."/>
        </authorList>
    </citation>
    <scope>CATALYTIC ACTIVITY</scope>
    <scope>BIOPHYSICOCHEMICAL PROPERTIES</scope>
</reference>
<reference key="4">
    <citation type="journal article" date="2001" name="Development">
        <title>Cross-induction of cell types in Dictyostelium: evidence that DIF-1 is made by prespore cells.</title>
        <authorList>
            <person name="Kay R.R."/>
            <person name="Thompson C.R."/>
        </authorList>
    </citation>
    <scope>INDUCTION</scope>
    <scope>DEVELOPMENTAL STAGE</scope>
</reference>
<reference key="5">
    <citation type="journal article" date="2006" name="Nat. Chem. Biol.">
        <title>Biosynthesis of Dictyostelium discoideum differentiation-inducing factor by a hybrid type I fatty acid-type III polyketide synthase.</title>
        <authorList>
            <person name="Austin M.B."/>
            <person name="Saito T."/>
            <person name="Bowman M.E."/>
            <person name="Haydock S."/>
            <person name="Kato A."/>
            <person name="Moore B.S."/>
            <person name="Kay R.R."/>
            <person name="Noel J.P."/>
        </authorList>
    </citation>
    <scope>FUNCTION</scope>
</reference>
<reference key="6">
    <citation type="journal article" date="2010" name="Proc. Natl. Acad. Sci. U.S.A.">
        <title>A flavin-dependent halogenase catalyzes the chlorination step in the biosynthesis of Dictyostelium differentiation-inducing factor 1.</title>
        <authorList>
            <person name="Neumann C.S."/>
            <person name="Walsh C.T."/>
            <person name="Kay R.R."/>
        </authorList>
    </citation>
    <scope>FUNCTION</scope>
</reference>
<proteinExistence type="evidence at protein level"/>
<organism>
    <name type="scientific">Dictyostelium discoideum</name>
    <name type="common">Social amoeba</name>
    <dbReference type="NCBI Taxonomy" id="44689"/>
    <lineage>
        <taxon>Eukaryota</taxon>
        <taxon>Amoebozoa</taxon>
        <taxon>Evosea</taxon>
        <taxon>Eumycetozoa</taxon>
        <taxon>Dictyostelia</taxon>
        <taxon>Dictyosteliales</taxon>
        <taxon>Dictyosteliaceae</taxon>
        <taxon>Dictyostelium</taxon>
    </lineage>
</organism>
<feature type="chain" id="PRO_0000328624" description="Des-methyl DIF-1 methyltransferase A">
    <location>
        <begin position="1"/>
        <end position="363"/>
    </location>
</feature>
<feature type="active site" description="Proton acceptor" evidence="1">
    <location>
        <position position="270"/>
    </location>
</feature>
<feature type="binding site" evidence="1">
    <location>
        <position position="195"/>
    </location>
    <ligand>
        <name>S-adenosyl-L-methionine</name>
        <dbReference type="ChEBI" id="CHEBI:59789"/>
    </ligand>
</feature>
<feature type="binding site" evidence="1">
    <location>
        <position position="221"/>
    </location>
    <ligand>
        <name>S-adenosyl-L-methionine</name>
        <dbReference type="ChEBI" id="CHEBI:59789"/>
    </ligand>
</feature>
<feature type="binding site" evidence="1">
    <location>
        <position position="250"/>
    </location>
    <ligand>
        <name>S-adenosyl-L-methionine</name>
        <dbReference type="ChEBI" id="CHEBI:59789"/>
    </ligand>
</feature>
<feature type="binding site" evidence="1">
    <location>
        <position position="251"/>
    </location>
    <ligand>
        <name>S-adenosyl-L-methionine</name>
        <dbReference type="ChEBI" id="CHEBI:59789"/>
    </ligand>
</feature>
<feature type="binding site" evidence="1">
    <location>
        <position position="266"/>
    </location>
    <ligand>
        <name>S-adenosyl-L-methionine</name>
        <dbReference type="ChEBI" id="CHEBI:59789"/>
    </ligand>
</feature>